<dbReference type="EC" id="3.6.5.n1" evidence="1"/>
<dbReference type="EMBL" id="CP000825">
    <property type="protein sequence ID" value="ABV50113.1"/>
    <property type="molecule type" value="Genomic_DNA"/>
</dbReference>
<dbReference type="RefSeq" id="WP_012007247.1">
    <property type="nucleotide sequence ID" value="NC_009840.1"/>
</dbReference>
<dbReference type="SMR" id="A8G3D2"/>
<dbReference type="STRING" id="93060.P9215_04971"/>
<dbReference type="KEGG" id="pmh:P9215_04971"/>
<dbReference type="eggNOG" id="COG0481">
    <property type="taxonomic scope" value="Bacteria"/>
</dbReference>
<dbReference type="HOGENOM" id="CLU_009995_3_3_3"/>
<dbReference type="OrthoDB" id="580826at2"/>
<dbReference type="Proteomes" id="UP000002014">
    <property type="component" value="Chromosome"/>
</dbReference>
<dbReference type="GO" id="GO:0005886">
    <property type="term" value="C:plasma membrane"/>
    <property type="evidence" value="ECO:0007669"/>
    <property type="project" value="UniProtKB-SubCell"/>
</dbReference>
<dbReference type="GO" id="GO:0005525">
    <property type="term" value="F:GTP binding"/>
    <property type="evidence" value="ECO:0007669"/>
    <property type="project" value="UniProtKB-KW"/>
</dbReference>
<dbReference type="GO" id="GO:0003924">
    <property type="term" value="F:GTPase activity"/>
    <property type="evidence" value="ECO:0007669"/>
    <property type="project" value="InterPro"/>
</dbReference>
<dbReference type="GO" id="GO:0043022">
    <property type="term" value="F:ribosome binding"/>
    <property type="evidence" value="ECO:0007669"/>
    <property type="project" value="TreeGrafter"/>
</dbReference>
<dbReference type="GO" id="GO:0045727">
    <property type="term" value="P:positive regulation of translation"/>
    <property type="evidence" value="ECO:0007669"/>
    <property type="project" value="TreeGrafter"/>
</dbReference>
<dbReference type="GO" id="GO:0006412">
    <property type="term" value="P:translation"/>
    <property type="evidence" value="ECO:0007669"/>
    <property type="project" value="UniProtKB-KW"/>
</dbReference>
<dbReference type="CDD" id="cd03699">
    <property type="entry name" value="EF4_II"/>
    <property type="match status" value="1"/>
</dbReference>
<dbReference type="CDD" id="cd16260">
    <property type="entry name" value="EF4_III"/>
    <property type="match status" value="1"/>
</dbReference>
<dbReference type="CDD" id="cd01890">
    <property type="entry name" value="LepA"/>
    <property type="match status" value="1"/>
</dbReference>
<dbReference type="CDD" id="cd03709">
    <property type="entry name" value="lepA_C"/>
    <property type="match status" value="1"/>
</dbReference>
<dbReference type="FunFam" id="3.40.50.300:FF:000078">
    <property type="entry name" value="Elongation factor 4"/>
    <property type="match status" value="1"/>
</dbReference>
<dbReference type="FunFam" id="2.40.30.10:FF:000015">
    <property type="entry name" value="Translation factor GUF1, mitochondrial"/>
    <property type="match status" value="1"/>
</dbReference>
<dbReference type="FunFam" id="3.30.70.240:FF:000007">
    <property type="entry name" value="Translation factor GUF1, mitochondrial"/>
    <property type="match status" value="1"/>
</dbReference>
<dbReference type="FunFam" id="3.30.70.2570:FF:000001">
    <property type="entry name" value="Translation factor GUF1, mitochondrial"/>
    <property type="match status" value="1"/>
</dbReference>
<dbReference type="FunFam" id="3.30.70.870:FF:000004">
    <property type="entry name" value="Translation factor GUF1, mitochondrial"/>
    <property type="match status" value="1"/>
</dbReference>
<dbReference type="Gene3D" id="3.30.70.240">
    <property type="match status" value="1"/>
</dbReference>
<dbReference type="Gene3D" id="3.30.70.2570">
    <property type="entry name" value="Elongation factor 4, C-terminal domain"/>
    <property type="match status" value="1"/>
</dbReference>
<dbReference type="Gene3D" id="3.30.70.870">
    <property type="entry name" value="Elongation Factor G (Translational Gtpase), domain 3"/>
    <property type="match status" value="1"/>
</dbReference>
<dbReference type="Gene3D" id="3.40.50.300">
    <property type="entry name" value="P-loop containing nucleotide triphosphate hydrolases"/>
    <property type="match status" value="1"/>
</dbReference>
<dbReference type="Gene3D" id="2.40.30.10">
    <property type="entry name" value="Translation factors"/>
    <property type="match status" value="1"/>
</dbReference>
<dbReference type="HAMAP" id="MF_03138">
    <property type="entry name" value="GUFP"/>
    <property type="match status" value="1"/>
</dbReference>
<dbReference type="HAMAP" id="MF_00071">
    <property type="entry name" value="LepA"/>
    <property type="match status" value="1"/>
</dbReference>
<dbReference type="InterPro" id="IPR006297">
    <property type="entry name" value="EF-4"/>
</dbReference>
<dbReference type="InterPro" id="IPR035647">
    <property type="entry name" value="EFG_III/V"/>
</dbReference>
<dbReference type="InterPro" id="IPR000640">
    <property type="entry name" value="EFG_V-like"/>
</dbReference>
<dbReference type="InterPro" id="IPR004161">
    <property type="entry name" value="EFTu-like_2"/>
</dbReference>
<dbReference type="InterPro" id="IPR031157">
    <property type="entry name" value="G_TR_CS"/>
</dbReference>
<dbReference type="InterPro" id="IPR027518">
    <property type="entry name" value="GUFP"/>
</dbReference>
<dbReference type="InterPro" id="IPR038363">
    <property type="entry name" value="LepA_C_sf"/>
</dbReference>
<dbReference type="InterPro" id="IPR013842">
    <property type="entry name" value="LepA_CTD"/>
</dbReference>
<dbReference type="InterPro" id="IPR035654">
    <property type="entry name" value="LepA_IV"/>
</dbReference>
<dbReference type="InterPro" id="IPR027417">
    <property type="entry name" value="P-loop_NTPase"/>
</dbReference>
<dbReference type="InterPro" id="IPR005225">
    <property type="entry name" value="Small_GTP-bd"/>
</dbReference>
<dbReference type="InterPro" id="IPR000795">
    <property type="entry name" value="T_Tr_GTP-bd_dom"/>
</dbReference>
<dbReference type="InterPro" id="IPR009000">
    <property type="entry name" value="Transl_B-barrel_sf"/>
</dbReference>
<dbReference type="NCBIfam" id="TIGR01393">
    <property type="entry name" value="lepA"/>
    <property type="match status" value="1"/>
</dbReference>
<dbReference type="NCBIfam" id="TIGR00231">
    <property type="entry name" value="small_GTP"/>
    <property type="match status" value="1"/>
</dbReference>
<dbReference type="PANTHER" id="PTHR43512:SF4">
    <property type="entry name" value="TRANSLATION FACTOR GUF1 HOMOLOG, CHLOROPLASTIC"/>
    <property type="match status" value="1"/>
</dbReference>
<dbReference type="PANTHER" id="PTHR43512">
    <property type="entry name" value="TRANSLATION FACTOR GUF1-RELATED"/>
    <property type="match status" value="1"/>
</dbReference>
<dbReference type="Pfam" id="PF00679">
    <property type="entry name" value="EFG_C"/>
    <property type="match status" value="1"/>
</dbReference>
<dbReference type="Pfam" id="PF00009">
    <property type="entry name" value="GTP_EFTU"/>
    <property type="match status" value="1"/>
</dbReference>
<dbReference type="Pfam" id="PF03144">
    <property type="entry name" value="GTP_EFTU_D2"/>
    <property type="match status" value="1"/>
</dbReference>
<dbReference type="Pfam" id="PF06421">
    <property type="entry name" value="LepA_C"/>
    <property type="match status" value="1"/>
</dbReference>
<dbReference type="PRINTS" id="PR00315">
    <property type="entry name" value="ELONGATNFCT"/>
</dbReference>
<dbReference type="SMART" id="SM00838">
    <property type="entry name" value="EFG_C"/>
    <property type="match status" value="1"/>
</dbReference>
<dbReference type="SUPFAM" id="SSF54980">
    <property type="entry name" value="EF-G C-terminal domain-like"/>
    <property type="match status" value="2"/>
</dbReference>
<dbReference type="SUPFAM" id="SSF52540">
    <property type="entry name" value="P-loop containing nucleoside triphosphate hydrolases"/>
    <property type="match status" value="1"/>
</dbReference>
<dbReference type="SUPFAM" id="SSF50447">
    <property type="entry name" value="Translation proteins"/>
    <property type="match status" value="1"/>
</dbReference>
<dbReference type="PROSITE" id="PS00301">
    <property type="entry name" value="G_TR_1"/>
    <property type="match status" value="1"/>
</dbReference>
<dbReference type="PROSITE" id="PS51722">
    <property type="entry name" value="G_TR_2"/>
    <property type="match status" value="1"/>
</dbReference>
<accession>A8G3D2</accession>
<proteinExistence type="inferred from homology"/>
<keyword id="KW-0997">Cell inner membrane</keyword>
<keyword id="KW-1003">Cell membrane</keyword>
<keyword id="KW-0342">GTP-binding</keyword>
<keyword id="KW-0378">Hydrolase</keyword>
<keyword id="KW-0472">Membrane</keyword>
<keyword id="KW-0547">Nucleotide-binding</keyword>
<keyword id="KW-0648">Protein biosynthesis</keyword>
<protein>
    <recommendedName>
        <fullName evidence="1">Elongation factor 4</fullName>
        <shortName evidence="1">EF-4</shortName>
        <ecNumber evidence="1">3.6.5.n1</ecNumber>
    </recommendedName>
    <alternativeName>
        <fullName evidence="1">Ribosomal back-translocase LepA</fullName>
    </alternativeName>
</protein>
<gene>
    <name evidence="1" type="primary">lepA</name>
    <name type="ordered locus">P9215_04971</name>
</gene>
<sequence>MTDISVSKIRNFCIIAHIDHGKSTLADRLLQDTGTVQQRDMQEQFLDSMDLERERGITIKLQAARMKYKADDSQEYVLNLIDTPGHVDFSYEVSRSLQACEGALLVVDASQGVEAQTLANVYLALENNLEIIPVLNKVDLPGADAEKIKQEIEEIIGLDTSNAINCSAKTGVGIKDILEAIVRRVPPPQDEIKLPTKALIFDSYYDPYRGVIVYFRVISGSLNKREKILLMASKKNYELDEIGIMAPDQQQVDELHAGEVGYLAASIKSVADARVGDTITLLNSPANEPLPGYKTANPMVFCGLFPTDADQFPDLRVSLEKLQLSDAALKYEPETSSAMGFGFRCGFLGLLHMEIVQERLEREYDLDLIVTAPSVIYKVNLNQQENIFIDNPSTIPDPQLRESIEEPYVKMEIYAPNEFNGTLMGLCQERRGVFIDMKYITTDRVTLIYEIPLAEVVTDFFDQMKSRTQGYASMEYHLIGYRKNDLVRLDVLINSERADPLTSIVHKDKAYGIGRSLVEKLKELIPKQQFKIPIQASIGSRIIASESISALRKDVLSKCYGGDISRKKKLLKKQAKGKKRMKAMGKVEVPQEAFMAVLKLNQ</sequence>
<name>LEPA_PROM2</name>
<comment type="function">
    <text evidence="1">Required for accurate and efficient protein synthesis under certain stress conditions. May act as a fidelity factor of the translation reaction, by catalyzing a one-codon backward translocation of tRNAs on improperly translocated ribosomes. Back-translocation proceeds from a post-translocation (POST) complex to a pre-translocation (PRE) complex, thus giving elongation factor G a second chance to translocate the tRNAs correctly. Binds to ribosomes in a GTP-dependent manner.</text>
</comment>
<comment type="catalytic activity">
    <reaction evidence="1">
        <text>GTP + H2O = GDP + phosphate + H(+)</text>
        <dbReference type="Rhea" id="RHEA:19669"/>
        <dbReference type="ChEBI" id="CHEBI:15377"/>
        <dbReference type="ChEBI" id="CHEBI:15378"/>
        <dbReference type="ChEBI" id="CHEBI:37565"/>
        <dbReference type="ChEBI" id="CHEBI:43474"/>
        <dbReference type="ChEBI" id="CHEBI:58189"/>
        <dbReference type="EC" id="3.6.5.n1"/>
    </reaction>
</comment>
<comment type="subcellular location">
    <subcellularLocation>
        <location evidence="1">Cell inner membrane</location>
        <topology evidence="1">Peripheral membrane protein</topology>
        <orientation evidence="1">Cytoplasmic side</orientation>
    </subcellularLocation>
</comment>
<comment type="similarity">
    <text evidence="1">Belongs to the TRAFAC class translation factor GTPase superfamily. Classic translation factor GTPase family. LepA subfamily.</text>
</comment>
<reference key="1">
    <citation type="journal article" date="2007" name="PLoS Genet.">
        <title>Patterns and implications of gene gain and loss in the evolution of Prochlorococcus.</title>
        <authorList>
            <person name="Kettler G.C."/>
            <person name="Martiny A.C."/>
            <person name="Huang K."/>
            <person name="Zucker J."/>
            <person name="Coleman M.L."/>
            <person name="Rodrigue S."/>
            <person name="Chen F."/>
            <person name="Lapidus A."/>
            <person name="Ferriera S."/>
            <person name="Johnson J."/>
            <person name="Steglich C."/>
            <person name="Church G.M."/>
            <person name="Richardson P."/>
            <person name="Chisholm S.W."/>
        </authorList>
    </citation>
    <scope>NUCLEOTIDE SEQUENCE [LARGE SCALE GENOMIC DNA]</scope>
    <source>
        <strain>MIT 9215</strain>
    </source>
</reference>
<organism>
    <name type="scientific">Prochlorococcus marinus (strain MIT 9215)</name>
    <dbReference type="NCBI Taxonomy" id="93060"/>
    <lineage>
        <taxon>Bacteria</taxon>
        <taxon>Bacillati</taxon>
        <taxon>Cyanobacteriota</taxon>
        <taxon>Cyanophyceae</taxon>
        <taxon>Synechococcales</taxon>
        <taxon>Prochlorococcaceae</taxon>
        <taxon>Prochlorococcus</taxon>
    </lineage>
</organism>
<feature type="chain" id="PRO_1000057477" description="Elongation factor 4">
    <location>
        <begin position="1"/>
        <end position="602"/>
    </location>
</feature>
<feature type="domain" description="tr-type G">
    <location>
        <begin position="7"/>
        <end position="189"/>
    </location>
</feature>
<feature type="binding site" evidence="1">
    <location>
        <begin position="19"/>
        <end position="24"/>
    </location>
    <ligand>
        <name>GTP</name>
        <dbReference type="ChEBI" id="CHEBI:37565"/>
    </ligand>
</feature>
<feature type="binding site" evidence="1">
    <location>
        <begin position="136"/>
        <end position="139"/>
    </location>
    <ligand>
        <name>GTP</name>
        <dbReference type="ChEBI" id="CHEBI:37565"/>
    </ligand>
</feature>
<evidence type="ECO:0000255" key="1">
    <source>
        <dbReference type="HAMAP-Rule" id="MF_00071"/>
    </source>
</evidence>